<accession>Q8K9Z4</accession>
<dbReference type="EC" id="1.17.7.4" evidence="1"/>
<dbReference type="EMBL" id="AE013218">
    <property type="protein sequence ID" value="AAM67708.1"/>
    <property type="molecule type" value="Genomic_DNA"/>
</dbReference>
<dbReference type="RefSeq" id="WP_011053675.1">
    <property type="nucleotide sequence ID" value="NC_004061.1"/>
</dbReference>
<dbReference type="SMR" id="Q8K9Z4"/>
<dbReference type="STRING" id="198804.BUsg_140"/>
<dbReference type="GeneID" id="93003610"/>
<dbReference type="KEGG" id="bas:BUsg_140"/>
<dbReference type="eggNOG" id="COG0761">
    <property type="taxonomic scope" value="Bacteria"/>
</dbReference>
<dbReference type="HOGENOM" id="CLU_027486_1_1_6"/>
<dbReference type="UniPathway" id="UPA00056">
    <property type="reaction ID" value="UER00097"/>
</dbReference>
<dbReference type="UniPathway" id="UPA00059">
    <property type="reaction ID" value="UER00105"/>
</dbReference>
<dbReference type="Proteomes" id="UP000000416">
    <property type="component" value="Chromosome"/>
</dbReference>
<dbReference type="GO" id="GO:0051539">
    <property type="term" value="F:4 iron, 4 sulfur cluster binding"/>
    <property type="evidence" value="ECO:0007669"/>
    <property type="project" value="UniProtKB-UniRule"/>
</dbReference>
<dbReference type="GO" id="GO:0051745">
    <property type="term" value="F:4-hydroxy-3-methylbut-2-enyl diphosphate reductase activity"/>
    <property type="evidence" value="ECO:0007669"/>
    <property type="project" value="UniProtKB-UniRule"/>
</dbReference>
<dbReference type="GO" id="GO:0046872">
    <property type="term" value="F:metal ion binding"/>
    <property type="evidence" value="ECO:0007669"/>
    <property type="project" value="UniProtKB-KW"/>
</dbReference>
<dbReference type="GO" id="GO:0050992">
    <property type="term" value="P:dimethylallyl diphosphate biosynthetic process"/>
    <property type="evidence" value="ECO:0007669"/>
    <property type="project" value="UniProtKB-UniRule"/>
</dbReference>
<dbReference type="GO" id="GO:0019288">
    <property type="term" value="P:isopentenyl diphosphate biosynthetic process, methylerythritol 4-phosphate pathway"/>
    <property type="evidence" value="ECO:0007669"/>
    <property type="project" value="UniProtKB-UniRule"/>
</dbReference>
<dbReference type="GO" id="GO:0016114">
    <property type="term" value="P:terpenoid biosynthetic process"/>
    <property type="evidence" value="ECO:0007669"/>
    <property type="project" value="UniProtKB-UniRule"/>
</dbReference>
<dbReference type="CDD" id="cd13944">
    <property type="entry name" value="lytB_ispH"/>
    <property type="match status" value="1"/>
</dbReference>
<dbReference type="Gene3D" id="3.40.50.11270">
    <property type="match status" value="1"/>
</dbReference>
<dbReference type="Gene3D" id="3.40.1010.20">
    <property type="entry name" value="4-hydroxy-3-methylbut-2-enyl diphosphate reductase, catalytic domain"/>
    <property type="match status" value="2"/>
</dbReference>
<dbReference type="HAMAP" id="MF_00191">
    <property type="entry name" value="IspH"/>
    <property type="match status" value="1"/>
</dbReference>
<dbReference type="InterPro" id="IPR003451">
    <property type="entry name" value="LytB/IspH"/>
</dbReference>
<dbReference type="NCBIfam" id="TIGR00216">
    <property type="entry name" value="ispH_lytB"/>
    <property type="match status" value="1"/>
</dbReference>
<dbReference type="NCBIfam" id="NF002188">
    <property type="entry name" value="PRK01045.1-2"/>
    <property type="match status" value="1"/>
</dbReference>
<dbReference type="NCBIfam" id="NF002190">
    <property type="entry name" value="PRK01045.1-4"/>
    <property type="match status" value="1"/>
</dbReference>
<dbReference type="PANTHER" id="PTHR30426">
    <property type="entry name" value="4-HYDROXY-3-METHYLBUT-2-ENYL DIPHOSPHATE REDUCTASE"/>
    <property type="match status" value="1"/>
</dbReference>
<dbReference type="PANTHER" id="PTHR30426:SF0">
    <property type="entry name" value="4-HYDROXY-3-METHYLBUT-2-ENYL DIPHOSPHATE REDUCTASE"/>
    <property type="match status" value="1"/>
</dbReference>
<dbReference type="Pfam" id="PF02401">
    <property type="entry name" value="LYTB"/>
    <property type="match status" value="1"/>
</dbReference>
<protein>
    <recommendedName>
        <fullName evidence="1">4-hydroxy-3-methylbut-2-enyl diphosphate reductase</fullName>
        <shortName evidence="1">HMBPP reductase</shortName>
        <ecNumber evidence="1">1.17.7.4</ecNumber>
    </recommendedName>
</protein>
<evidence type="ECO:0000255" key="1">
    <source>
        <dbReference type="HAMAP-Rule" id="MF_00191"/>
    </source>
</evidence>
<organism>
    <name type="scientific">Buchnera aphidicola subsp. Schizaphis graminum (strain Sg)</name>
    <dbReference type="NCBI Taxonomy" id="198804"/>
    <lineage>
        <taxon>Bacteria</taxon>
        <taxon>Pseudomonadati</taxon>
        <taxon>Pseudomonadota</taxon>
        <taxon>Gammaproteobacteria</taxon>
        <taxon>Enterobacterales</taxon>
        <taxon>Erwiniaceae</taxon>
        <taxon>Buchnera</taxon>
    </lineage>
</organism>
<name>ISPH_BUCAP</name>
<gene>
    <name evidence="1" type="primary">ispH</name>
    <name type="synonym">lytB</name>
    <name type="ordered locus">BUsg_140</name>
</gene>
<reference key="1">
    <citation type="journal article" date="2002" name="Science">
        <title>50 million years of genomic stasis in endosymbiotic bacteria.</title>
        <authorList>
            <person name="Tamas I."/>
            <person name="Klasson L."/>
            <person name="Canbaeck B."/>
            <person name="Naeslund A.K."/>
            <person name="Eriksson A.-S."/>
            <person name="Wernegreen J.J."/>
            <person name="Sandstroem J.P."/>
            <person name="Moran N.A."/>
            <person name="Andersson S.G.E."/>
        </authorList>
    </citation>
    <scope>NUCLEOTIDE SEQUENCE [LARGE SCALE GENOMIC DNA]</scope>
    <source>
        <strain>Sg</strain>
    </source>
</reference>
<feature type="chain" id="PRO_0000128790" description="4-hydroxy-3-methylbut-2-enyl diphosphate reductase">
    <location>
        <begin position="1"/>
        <end position="313"/>
    </location>
</feature>
<feature type="active site" description="Proton donor" evidence="1">
    <location>
        <position position="126"/>
    </location>
</feature>
<feature type="binding site" evidence="1">
    <location>
        <position position="12"/>
    </location>
    <ligand>
        <name>[4Fe-4S] cluster</name>
        <dbReference type="ChEBI" id="CHEBI:49883"/>
    </ligand>
</feature>
<feature type="binding site" evidence="1">
    <location>
        <position position="41"/>
    </location>
    <ligand>
        <name>(2E)-4-hydroxy-3-methylbut-2-enyl diphosphate</name>
        <dbReference type="ChEBI" id="CHEBI:128753"/>
    </ligand>
</feature>
<feature type="binding site" evidence="1">
    <location>
        <position position="41"/>
    </location>
    <ligand>
        <name>dimethylallyl diphosphate</name>
        <dbReference type="ChEBI" id="CHEBI:57623"/>
    </ligand>
</feature>
<feature type="binding site" evidence="1">
    <location>
        <position position="41"/>
    </location>
    <ligand>
        <name>isopentenyl diphosphate</name>
        <dbReference type="ChEBI" id="CHEBI:128769"/>
    </ligand>
</feature>
<feature type="binding site" evidence="1">
    <location>
        <position position="74"/>
    </location>
    <ligand>
        <name>(2E)-4-hydroxy-3-methylbut-2-enyl diphosphate</name>
        <dbReference type="ChEBI" id="CHEBI:128753"/>
    </ligand>
</feature>
<feature type="binding site" evidence="1">
    <location>
        <position position="74"/>
    </location>
    <ligand>
        <name>dimethylallyl diphosphate</name>
        <dbReference type="ChEBI" id="CHEBI:57623"/>
    </ligand>
</feature>
<feature type="binding site" evidence="1">
    <location>
        <position position="74"/>
    </location>
    <ligand>
        <name>isopentenyl diphosphate</name>
        <dbReference type="ChEBI" id="CHEBI:128769"/>
    </ligand>
</feature>
<feature type="binding site" evidence="1">
    <location>
        <position position="96"/>
    </location>
    <ligand>
        <name>[4Fe-4S] cluster</name>
        <dbReference type="ChEBI" id="CHEBI:49883"/>
    </ligand>
</feature>
<feature type="binding site" evidence="1">
    <location>
        <position position="124"/>
    </location>
    <ligand>
        <name>(2E)-4-hydroxy-3-methylbut-2-enyl diphosphate</name>
        <dbReference type="ChEBI" id="CHEBI:128753"/>
    </ligand>
</feature>
<feature type="binding site" evidence="1">
    <location>
        <position position="124"/>
    </location>
    <ligand>
        <name>dimethylallyl diphosphate</name>
        <dbReference type="ChEBI" id="CHEBI:57623"/>
    </ligand>
</feature>
<feature type="binding site" evidence="1">
    <location>
        <position position="124"/>
    </location>
    <ligand>
        <name>isopentenyl diphosphate</name>
        <dbReference type="ChEBI" id="CHEBI:128769"/>
    </ligand>
</feature>
<feature type="binding site" evidence="1">
    <location>
        <position position="167"/>
    </location>
    <ligand>
        <name>(2E)-4-hydroxy-3-methylbut-2-enyl diphosphate</name>
        <dbReference type="ChEBI" id="CHEBI:128753"/>
    </ligand>
</feature>
<feature type="binding site" evidence="1">
    <location>
        <position position="197"/>
    </location>
    <ligand>
        <name>[4Fe-4S] cluster</name>
        <dbReference type="ChEBI" id="CHEBI:49883"/>
    </ligand>
</feature>
<feature type="binding site" evidence="1">
    <location>
        <position position="225"/>
    </location>
    <ligand>
        <name>(2E)-4-hydroxy-3-methylbut-2-enyl diphosphate</name>
        <dbReference type="ChEBI" id="CHEBI:128753"/>
    </ligand>
</feature>
<feature type="binding site" evidence="1">
    <location>
        <position position="225"/>
    </location>
    <ligand>
        <name>dimethylallyl diphosphate</name>
        <dbReference type="ChEBI" id="CHEBI:57623"/>
    </ligand>
</feature>
<feature type="binding site" evidence="1">
    <location>
        <position position="225"/>
    </location>
    <ligand>
        <name>isopentenyl diphosphate</name>
        <dbReference type="ChEBI" id="CHEBI:128769"/>
    </ligand>
</feature>
<feature type="binding site" evidence="1">
    <location>
        <position position="226"/>
    </location>
    <ligand>
        <name>(2E)-4-hydroxy-3-methylbut-2-enyl diphosphate</name>
        <dbReference type="ChEBI" id="CHEBI:128753"/>
    </ligand>
</feature>
<feature type="binding site" evidence="1">
    <location>
        <position position="226"/>
    </location>
    <ligand>
        <name>dimethylallyl diphosphate</name>
        <dbReference type="ChEBI" id="CHEBI:57623"/>
    </ligand>
</feature>
<feature type="binding site" evidence="1">
    <location>
        <position position="226"/>
    </location>
    <ligand>
        <name>isopentenyl diphosphate</name>
        <dbReference type="ChEBI" id="CHEBI:128769"/>
    </ligand>
</feature>
<feature type="binding site" evidence="1">
    <location>
        <position position="227"/>
    </location>
    <ligand>
        <name>(2E)-4-hydroxy-3-methylbut-2-enyl diphosphate</name>
        <dbReference type="ChEBI" id="CHEBI:128753"/>
    </ligand>
</feature>
<feature type="binding site" evidence="1">
    <location>
        <position position="227"/>
    </location>
    <ligand>
        <name>dimethylallyl diphosphate</name>
        <dbReference type="ChEBI" id="CHEBI:57623"/>
    </ligand>
</feature>
<feature type="binding site" evidence="1">
    <location>
        <position position="227"/>
    </location>
    <ligand>
        <name>isopentenyl diphosphate</name>
        <dbReference type="ChEBI" id="CHEBI:128769"/>
    </ligand>
</feature>
<feature type="binding site" evidence="1">
    <location>
        <position position="269"/>
    </location>
    <ligand>
        <name>(2E)-4-hydroxy-3-methylbut-2-enyl diphosphate</name>
        <dbReference type="ChEBI" id="CHEBI:128753"/>
    </ligand>
</feature>
<feature type="binding site" evidence="1">
    <location>
        <position position="269"/>
    </location>
    <ligand>
        <name>dimethylallyl diphosphate</name>
        <dbReference type="ChEBI" id="CHEBI:57623"/>
    </ligand>
</feature>
<feature type="binding site" evidence="1">
    <location>
        <position position="269"/>
    </location>
    <ligand>
        <name>isopentenyl diphosphate</name>
        <dbReference type="ChEBI" id="CHEBI:128769"/>
    </ligand>
</feature>
<proteinExistence type="inferred from homology"/>
<sequence>MNIILAKPRGFCAGVKRALLIVENALKIYKKTIYVQHELVHNQYVIETLRQKGVVFVEDISDIPNNSIVVFSAHGVSKKIKKKAIKKNLTILNATCPLVTKVHLEVSKSSKNGIETILIGHRGHPEVIGTIGQYDNKKGKIHLIEDIEDVNQLTIKIDKKLNFFTQTTLSIKNTQSIILALKKKFLNISGPKKEDICYATTNRQNAIIKLSKITDIILVIGSKNSSNSSRLSELGKETGVFTKQIESFSDIKEEWLKNKKNIGITAGASAPDILVEEVIKHLKKLGFKNPPKEMLGDEEKTIFKIPKNLNVQN</sequence>
<comment type="function">
    <text evidence="1">Catalyzes the conversion of 1-hydroxy-2-methyl-2-(E)-butenyl 4-diphosphate (HMBPP) into a mixture of isopentenyl diphosphate (IPP) and dimethylallyl diphosphate (DMAPP). Acts in the terminal step of the DOXP/MEP pathway for isoprenoid precursor biosynthesis.</text>
</comment>
<comment type="catalytic activity">
    <reaction evidence="1">
        <text>isopentenyl diphosphate + 2 oxidized [2Fe-2S]-[ferredoxin] + H2O = (2E)-4-hydroxy-3-methylbut-2-enyl diphosphate + 2 reduced [2Fe-2S]-[ferredoxin] + 2 H(+)</text>
        <dbReference type="Rhea" id="RHEA:24488"/>
        <dbReference type="Rhea" id="RHEA-COMP:10000"/>
        <dbReference type="Rhea" id="RHEA-COMP:10001"/>
        <dbReference type="ChEBI" id="CHEBI:15377"/>
        <dbReference type="ChEBI" id="CHEBI:15378"/>
        <dbReference type="ChEBI" id="CHEBI:33737"/>
        <dbReference type="ChEBI" id="CHEBI:33738"/>
        <dbReference type="ChEBI" id="CHEBI:128753"/>
        <dbReference type="ChEBI" id="CHEBI:128769"/>
        <dbReference type="EC" id="1.17.7.4"/>
    </reaction>
</comment>
<comment type="catalytic activity">
    <reaction evidence="1">
        <text>dimethylallyl diphosphate + 2 oxidized [2Fe-2S]-[ferredoxin] + H2O = (2E)-4-hydroxy-3-methylbut-2-enyl diphosphate + 2 reduced [2Fe-2S]-[ferredoxin] + 2 H(+)</text>
        <dbReference type="Rhea" id="RHEA:24825"/>
        <dbReference type="Rhea" id="RHEA-COMP:10000"/>
        <dbReference type="Rhea" id="RHEA-COMP:10001"/>
        <dbReference type="ChEBI" id="CHEBI:15377"/>
        <dbReference type="ChEBI" id="CHEBI:15378"/>
        <dbReference type="ChEBI" id="CHEBI:33737"/>
        <dbReference type="ChEBI" id="CHEBI:33738"/>
        <dbReference type="ChEBI" id="CHEBI:57623"/>
        <dbReference type="ChEBI" id="CHEBI:128753"/>
        <dbReference type="EC" id="1.17.7.4"/>
    </reaction>
</comment>
<comment type="cofactor">
    <cofactor evidence="1">
        <name>[4Fe-4S] cluster</name>
        <dbReference type="ChEBI" id="CHEBI:49883"/>
    </cofactor>
    <text evidence="1">Binds 1 [4Fe-4S] cluster per subunit.</text>
</comment>
<comment type="pathway">
    <text evidence="1">Isoprenoid biosynthesis; dimethylallyl diphosphate biosynthesis; dimethylallyl diphosphate from (2E)-4-hydroxy-3-methylbutenyl diphosphate: step 1/1.</text>
</comment>
<comment type="pathway">
    <text evidence="1">Isoprenoid biosynthesis; isopentenyl diphosphate biosynthesis via DXP pathway; isopentenyl diphosphate from 1-deoxy-D-xylulose 5-phosphate: step 6/6.</text>
</comment>
<comment type="subunit">
    <text evidence="1">Homodimer.</text>
</comment>
<comment type="similarity">
    <text evidence="1">Belongs to the IspH family.</text>
</comment>
<keyword id="KW-0004">4Fe-4S</keyword>
<keyword id="KW-0408">Iron</keyword>
<keyword id="KW-0411">Iron-sulfur</keyword>
<keyword id="KW-0414">Isoprene biosynthesis</keyword>
<keyword id="KW-0479">Metal-binding</keyword>
<keyword id="KW-0560">Oxidoreductase</keyword>